<name>RS17_DESOH</name>
<organism>
    <name type="scientific">Desulfosudis oleivorans (strain DSM 6200 / JCM 39069 / Hxd3)</name>
    <name type="common">Desulfococcus oleovorans</name>
    <dbReference type="NCBI Taxonomy" id="96561"/>
    <lineage>
        <taxon>Bacteria</taxon>
        <taxon>Pseudomonadati</taxon>
        <taxon>Thermodesulfobacteriota</taxon>
        <taxon>Desulfobacteria</taxon>
        <taxon>Desulfobacterales</taxon>
        <taxon>Desulfosudaceae</taxon>
        <taxon>Desulfosudis</taxon>
    </lineage>
</organism>
<dbReference type="EMBL" id="CP000859">
    <property type="protein sequence ID" value="ABW66527.1"/>
    <property type="molecule type" value="Genomic_DNA"/>
</dbReference>
<dbReference type="RefSeq" id="WP_012174145.1">
    <property type="nucleotide sequence ID" value="NC_009943.1"/>
</dbReference>
<dbReference type="SMR" id="A8ZV66"/>
<dbReference type="STRING" id="96561.Dole_0717"/>
<dbReference type="KEGG" id="dol:Dole_0717"/>
<dbReference type="eggNOG" id="COG0186">
    <property type="taxonomic scope" value="Bacteria"/>
</dbReference>
<dbReference type="HOGENOM" id="CLU_073626_1_1_7"/>
<dbReference type="OrthoDB" id="9811714at2"/>
<dbReference type="Proteomes" id="UP000008561">
    <property type="component" value="Chromosome"/>
</dbReference>
<dbReference type="GO" id="GO:0022627">
    <property type="term" value="C:cytosolic small ribosomal subunit"/>
    <property type="evidence" value="ECO:0007669"/>
    <property type="project" value="TreeGrafter"/>
</dbReference>
<dbReference type="GO" id="GO:0019843">
    <property type="term" value="F:rRNA binding"/>
    <property type="evidence" value="ECO:0007669"/>
    <property type="project" value="UniProtKB-UniRule"/>
</dbReference>
<dbReference type="GO" id="GO:0003735">
    <property type="term" value="F:structural constituent of ribosome"/>
    <property type="evidence" value="ECO:0007669"/>
    <property type="project" value="InterPro"/>
</dbReference>
<dbReference type="GO" id="GO:0006412">
    <property type="term" value="P:translation"/>
    <property type="evidence" value="ECO:0007669"/>
    <property type="project" value="UniProtKB-UniRule"/>
</dbReference>
<dbReference type="CDD" id="cd00364">
    <property type="entry name" value="Ribosomal_uS17"/>
    <property type="match status" value="1"/>
</dbReference>
<dbReference type="Gene3D" id="2.40.50.140">
    <property type="entry name" value="Nucleic acid-binding proteins"/>
    <property type="match status" value="1"/>
</dbReference>
<dbReference type="HAMAP" id="MF_01345_B">
    <property type="entry name" value="Ribosomal_uS17_B"/>
    <property type="match status" value="1"/>
</dbReference>
<dbReference type="InterPro" id="IPR012340">
    <property type="entry name" value="NA-bd_OB-fold"/>
</dbReference>
<dbReference type="InterPro" id="IPR000266">
    <property type="entry name" value="Ribosomal_uS17"/>
</dbReference>
<dbReference type="InterPro" id="IPR019984">
    <property type="entry name" value="Ribosomal_uS17_bact/chlr"/>
</dbReference>
<dbReference type="InterPro" id="IPR019979">
    <property type="entry name" value="Ribosomal_uS17_CS"/>
</dbReference>
<dbReference type="NCBIfam" id="NF004123">
    <property type="entry name" value="PRK05610.1"/>
    <property type="match status" value="1"/>
</dbReference>
<dbReference type="NCBIfam" id="TIGR03635">
    <property type="entry name" value="uS17_bact"/>
    <property type="match status" value="1"/>
</dbReference>
<dbReference type="PANTHER" id="PTHR10744">
    <property type="entry name" value="40S RIBOSOMAL PROTEIN S11 FAMILY MEMBER"/>
    <property type="match status" value="1"/>
</dbReference>
<dbReference type="PANTHER" id="PTHR10744:SF1">
    <property type="entry name" value="SMALL RIBOSOMAL SUBUNIT PROTEIN US17M"/>
    <property type="match status" value="1"/>
</dbReference>
<dbReference type="Pfam" id="PF00366">
    <property type="entry name" value="Ribosomal_S17"/>
    <property type="match status" value="1"/>
</dbReference>
<dbReference type="PRINTS" id="PR00973">
    <property type="entry name" value="RIBOSOMALS17"/>
</dbReference>
<dbReference type="SUPFAM" id="SSF50249">
    <property type="entry name" value="Nucleic acid-binding proteins"/>
    <property type="match status" value="1"/>
</dbReference>
<dbReference type="PROSITE" id="PS00056">
    <property type="entry name" value="RIBOSOMAL_S17"/>
    <property type="match status" value="1"/>
</dbReference>
<protein>
    <recommendedName>
        <fullName evidence="1">Small ribosomal subunit protein uS17</fullName>
    </recommendedName>
    <alternativeName>
        <fullName evidence="2">30S ribosomal protein S17</fullName>
    </alternativeName>
</protein>
<accession>A8ZV66</accession>
<proteinExistence type="inferred from homology"/>
<sequence length="85" mass="9866">MKTRGLKRQFEGTVVSDKMDKTVIVAVERLVKHQEYKKYVRRTAKFAAHDEQNQCAVGDKVIITESRPLSRTKHWRVVNVVEKAV</sequence>
<gene>
    <name evidence="1" type="primary">rpsQ</name>
    <name type="ordered locus">Dole_0717</name>
</gene>
<feature type="chain" id="PRO_1000143247" description="Small ribosomal subunit protein uS17">
    <location>
        <begin position="1"/>
        <end position="85"/>
    </location>
</feature>
<reference key="1">
    <citation type="submission" date="2007-10" db="EMBL/GenBank/DDBJ databases">
        <title>Complete sequence of Desulfococcus oleovorans Hxd3.</title>
        <authorList>
            <consortium name="US DOE Joint Genome Institute"/>
            <person name="Copeland A."/>
            <person name="Lucas S."/>
            <person name="Lapidus A."/>
            <person name="Barry K."/>
            <person name="Glavina del Rio T."/>
            <person name="Dalin E."/>
            <person name="Tice H."/>
            <person name="Pitluck S."/>
            <person name="Kiss H."/>
            <person name="Brettin T."/>
            <person name="Bruce D."/>
            <person name="Detter J.C."/>
            <person name="Han C."/>
            <person name="Schmutz J."/>
            <person name="Larimer F."/>
            <person name="Land M."/>
            <person name="Hauser L."/>
            <person name="Kyrpides N."/>
            <person name="Kim E."/>
            <person name="Wawrik B."/>
            <person name="Richardson P."/>
        </authorList>
    </citation>
    <scope>NUCLEOTIDE SEQUENCE [LARGE SCALE GENOMIC DNA]</scope>
    <source>
        <strain>DSM 6200 / JCM 39069 / Hxd3</strain>
    </source>
</reference>
<comment type="function">
    <text evidence="1">One of the primary rRNA binding proteins, it binds specifically to the 5'-end of 16S ribosomal RNA.</text>
</comment>
<comment type="subunit">
    <text evidence="1">Part of the 30S ribosomal subunit.</text>
</comment>
<comment type="similarity">
    <text evidence="1">Belongs to the universal ribosomal protein uS17 family.</text>
</comment>
<keyword id="KW-1185">Reference proteome</keyword>
<keyword id="KW-0687">Ribonucleoprotein</keyword>
<keyword id="KW-0689">Ribosomal protein</keyword>
<keyword id="KW-0694">RNA-binding</keyword>
<keyword id="KW-0699">rRNA-binding</keyword>
<evidence type="ECO:0000255" key="1">
    <source>
        <dbReference type="HAMAP-Rule" id="MF_01345"/>
    </source>
</evidence>
<evidence type="ECO:0000305" key="2"/>